<accession>Q4QMG3</accession>
<keyword id="KW-0131">Cell cycle</keyword>
<keyword id="KW-0132">Cell division</keyword>
<keyword id="KW-0574">Periplasm</keyword>
<keyword id="KW-0732">Signal</keyword>
<name>FTSP_HAEI8</name>
<feature type="signal peptide" description="Tat-type signal" evidence="1">
    <location>
        <begin position="1"/>
        <end position="29"/>
    </location>
</feature>
<feature type="chain" id="PRO_0000416009" description="Cell division protein FtsP">
    <location>
        <begin position="30"/>
        <end position="469"/>
    </location>
</feature>
<feature type="domain" description="Plastocyanin-like" evidence="1">
    <location>
        <begin position="228"/>
        <end position="286"/>
    </location>
</feature>
<comment type="function">
    <text evidence="1">Cell division protein that is required for growth during stress conditions. May be involved in protecting or stabilizing the divisomal assembly under conditions of stress.</text>
</comment>
<comment type="subcellular location">
    <subcellularLocation>
        <location evidence="1">Periplasm</location>
    </subcellularLocation>
    <text evidence="1">Localizes to the division septum.</text>
</comment>
<comment type="PTM">
    <text>Predicted to be exported by the Tat system. The position of the signal peptide cleavage has not been experimentally proven.</text>
</comment>
<comment type="similarity">
    <text evidence="1">Belongs to the FtsP family.</text>
</comment>
<evidence type="ECO:0000255" key="1">
    <source>
        <dbReference type="HAMAP-Rule" id="MF_00915"/>
    </source>
</evidence>
<gene>
    <name evidence="1" type="primary">ftsP</name>
    <name type="ordered locus">NTHI0890</name>
</gene>
<organism>
    <name type="scientific">Haemophilus influenzae (strain 86-028NP)</name>
    <dbReference type="NCBI Taxonomy" id="281310"/>
    <lineage>
        <taxon>Bacteria</taxon>
        <taxon>Pseudomonadati</taxon>
        <taxon>Pseudomonadota</taxon>
        <taxon>Gammaproteobacteria</taxon>
        <taxon>Pasteurellales</taxon>
        <taxon>Pasteurellaceae</taxon>
        <taxon>Haemophilus</taxon>
    </lineage>
</organism>
<sequence>MPRLSRRQLLKTAAISTALSTVPAPLLAASREKLVVPPLIEVRRGRPIVLTMQETNYPLDGSHNVTVWGFNGNYLGPTIKIKSGSFAKLNYHNNLPQSVALSIQGLQASGELFGGAARVLKKGESWAPIVPIEQPAASCWYRSATLANSAYQTYRGLAGMWLIEDEQSLKANLPNKYGVDDIPLILQDMEFNNDGLQLFKQNQPHFVGNRLLVNGIEAPYLDVARGWIRLRLLNASLARAYDLRLDNDQEMLLIAQDLSFLPKAKSVKSLVLSPGERAEILVNMNEIDNVSLISGSKRSLYEKIKNMLFSGDELANNTVLELRAQGQLSAFNKQPNLTFETDAPAILQQAVAQTREFNIDVTNGLINQRRFDPRKVDVMARKGTIERWILNASLPVGFTIQGAKFVVESQGEHQLQAEELAWKDTVWVKNKTQILVKFDQASSGNFPFLFGVSNLMLEDMGCLGVLMVQ</sequence>
<reference key="1">
    <citation type="journal article" date="2005" name="J. Bacteriol.">
        <title>Genomic sequence of an otitis media isolate of nontypeable Haemophilus influenzae: comparative study with H. influenzae serotype d, strain KW20.</title>
        <authorList>
            <person name="Harrison A."/>
            <person name="Dyer D.W."/>
            <person name="Gillaspy A."/>
            <person name="Ray W.C."/>
            <person name="Mungur R."/>
            <person name="Carson M.B."/>
            <person name="Zhong H."/>
            <person name="Gipson J."/>
            <person name="Gipson M."/>
            <person name="Johnson L.S."/>
            <person name="Lewis L."/>
            <person name="Bakaletz L.O."/>
            <person name="Munson R.S. Jr."/>
        </authorList>
    </citation>
    <scope>NUCLEOTIDE SEQUENCE [LARGE SCALE GENOMIC DNA]</scope>
    <source>
        <strain>86-028NP</strain>
    </source>
</reference>
<protein>
    <recommendedName>
        <fullName evidence="1">Cell division protein FtsP</fullName>
    </recommendedName>
</protein>
<dbReference type="EMBL" id="CP000057">
    <property type="protein sequence ID" value="AAX87784.1"/>
    <property type="molecule type" value="Genomic_DNA"/>
</dbReference>
<dbReference type="RefSeq" id="WP_005689021.1">
    <property type="nucleotide sequence ID" value="NC_007146.2"/>
</dbReference>
<dbReference type="SMR" id="Q4QMG3"/>
<dbReference type="GeneID" id="93219771"/>
<dbReference type="KEGG" id="hit:NTHI0890"/>
<dbReference type="HOGENOM" id="CLU_009100_2_4_6"/>
<dbReference type="Proteomes" id="UP000002525">
    <property type="component" value="Chromosome"/>
</dbReference>
<dbReference type="GO" id="GO:0032153">
    <property type="term" value="C:cell division site"/>
    <property type="evidence" value="ECO:0007669"/>
    <property type="project" value="UniProtKB-UniRule"/>
</dbReference>
<dbReference type="GO" id="GO:0030288">
    <property type="term" value="C:outer membrane-bounded periplasmic space"/>
    <property type="evidence" value="ECO:0007669"/>
    <property type="project" value="UniProtKB-UniRule"/>
</dbReference>
<dbReference type="GO" id="GO:0005507">
    <property type="term" value="F:copper ion binding"/>
    <property type="evidence" value="ECO:0007669"/>
    <property type="project" value="InterPro"/>
</dbReference>
<dbReference type="GO" id="GO:0016491">
    <property type="term" value="F:oxidoreductase activity"/>
    <property type="evidence" value="ECO:0007669"/>
    <property type="project" value="InterPro"/>
</dbReference>
<dbReference type="GO" id="GO:0043093">
    <property type="term" value="P:FtsZ-dependent cytokinesis"/>
    <property type="evidence" value="ECO:0007669"/>
    <property type="project" value="UniProtKB-UniRule"/>
</dbReference>
<dbReference type="CDD" id="cd04232">
    <property type="entry name" value="CuRO_1_CueO_FtsP"/>
    <property type="match status" value="1"/>
</dbReference>
<dbReference type="CDD" id="cd13867">
    <property type="entry name" value="CuRO_2_CueO_FtsP"/>
    <property type="match status" value="1"/>
</dbReference>
<dbReference type="CDD" id="cd13890">
    <property type="entry name" value="CuRO_3_CueO_FtsP"/>
    <property type="match status" value="1"/>
</dbReference>
<dbReference type="Gene3D" id="2.60.40.420">
    <property type="entry name" value="Cupredoxins - blue copper proteins"/>
    <property type="match status" value="3"/>
</dbReference>
<dbReference type="HAMAP" id="MF_00915">
    <property type="entry name" value="FtsP"/>
    <property type="match status" value="1"/>
</dbReference>
<dbReference type="InterPro" id="IPR011707">
    <property type="entry name" value="Cu-oxidase-like_N"/>
</dbReference>
<dbReference type="InterPro" id="IPR001117">
    <property type="entry name" value="Cu-oxidase_2nd"/>
</dbReference>
<dbReference type="InterPro" id="IPR011706">
    <property type="entry name" value="Cu-oxidase_C"/>
</dbReference>
<dbReference type="InterPro" id="IPR045087">
    <property type="entry name" value="Cu-oxidase_fam"/>
</dbReference>
<dbReference type="InterPro" id="IPR008972">
    <property type="entry name" value="Cupredoxin"/>
</dbReference>
<dbReference type="InterPro" id="IPR026589">
    <property type="entry name" value="FtsP"/>
</dbReference>
<dbReference type="InterPro" id="IPR006311">
    <property type="entry name" value="TAT_signal"/>
</dbReference>
<dbReference type="PANTHER" id="PTHR48267:SF1">
    <property type="entry name" value="BILIRUBIN OXIDASE"/>
    <property type="match status" value="1"/>
</dbReference>
<dbReference type="PANTHER" id="PTHR48267">
    <property type="entry name" value="CUPREDOXIN SUPERFAMILY PROTEIN"/>
    <property type="match status" value="1"/>
</dbReference>
<dbReference type="Pfam" id="PF00394">
    <property type="entry name" value="Cu-oxidase"/>
    <property type="match status" value="1"/>
</dbReference>
<dbReference type="Pfam" id="PF07731">
    <property type="entry name" value="Cu-oxidase_2"/>
    <property type="match status" value="1"/>
</dbReference>
<dbReference type="Pfam" id="PF07732">
    <property type="entry name" value="Cu-oxidase_3"/>
    <property type="match status" value="1"/>
</dbReference>
<dbReference type="SUPFAM" id="SSF49503">
    <property type="entry name" value="Cupredoxins"/>
    <property type="match status" value="3"/>
</dbReference>
<dbReference type="PROSITE" id="PS51318">
    <property type="entry name" value="TAT"/>
    <property type="match status" value="1"/>
</dbReference>
<proteinExistence type="inferred from homology"/>